<gene>
    <name evidence="1" type="primary">deoB</name>
    <name type="ordered locus">SpyM51112</name>
</gene>
<accession>A2RF12</accession>
<sequence length="403" mass="44228">MSKFNRIHLVVLDSVGIGAAPDADKFFNAGVADTDSDTLGHISETAGLSVPNMVKIGLGNISRPIPLKTVPTEDNPTGYVTKLEEVSLGKDTMTGHWEIMGLNITEPFDTFWNGFPEEILTKIEEFSGRKIIREANKPYSGTAVIDDFGPRQMETGELIVYTSADPVLQIAAHEDIIPVEELYKICEYARSITLERPALLGRIIARPYVGEPGNFTRTANRHDYAVSPFQDTVLNKLADAGVPTYAVGKINDIFNGSGITNDMGHNKSNSHGIDTLIKTLQLPEFTKGFSFTNLVDFDANFGHRRDSEGYRDCLHEFDNRLPEIIANMKEDDLLLITADHGNDPTYAGTDHTREYIPLLAYSASFTGNGLIPQGHFADISATVAENFGVDTAMIGESFLGHLK</sequence>
<name>DEOB_STRPG</name>
<comment type="function">
    <text evidence="1">Isomerase that catalyzes the conversion of deoxy-ribose 1-phosphate (dRib-1-P) and ribose 1-phosphate (Rib-1-P) to deoxy-ribose 5-phosphate (dRib-5-P) and ribose 5-phosphate (Rib-5-P), respectively.</text>
</comment>
<comment type="catalytic activity">
    <reaction evidence="1">
        <text>2-deoxy-alpha-D-ribose 1-phosphate = 2-deoxy-D-ribose 5-phosphate</text>
        <dbReference type="Rhea" id="RHEA:27658"/>
        <dbReference type="ChEBI" id="CHEBI:57259"/>
        <dbReference type="ChEBI" id="CHEBI:62877"/>
        <dbReference type="EC" id="5.4.2.7"/>
    </reaction>
</comment>
<comment type="catalytic activity">
    <reaction evidence="1">
        <text>alpha-D-ribose 1-phosphate = D-ribose 5-phosphate</text>
        <dbReference type="Rhea" id="RHEA:18793"/>
        <dbReference type="ChEBI" id="CHEBI:57720"/>
        <dbReference type="ChEBI" id="CHEBI:78346"/>
        <dbReference type="EC" id="5.4.2.7"/>
    </reaction>
</comment>
<comment type="cofactor">
    <cofactor evidence="1">
        <name>Mn(2+)</name>
        <dbReference type="ChEBI" id="CHEBI:29035"/>
    </cofactor>
    <text evidence="1">Binds 2 manganese ions.</text>
</comment>
<comment type="pathway">
    <text evidence="1">Carbohydrate degradation; 2-deoxy-D-ribose 1-phosphate degradation; D-glyceraldehyde 3-phosphate and acetaldehyde from 2-deoxy-alpha-D-ribose 1-phosphate: step 1/2.</text>
</comment>
<comment type="subcellular location">
    <subcellularLocation>
        <location evidence="1">Cytoplasm</location>
    </subcellularLocation>
</comment>
<comment type="similarity">
    <text evidence="1">Belongs to the phosphopentomutase family.</text>
</comment>
<dbReference type="EC" id="5.4.2.7" evidence="1"/>
<dbReference type="EMBL" id="AM295007">
    <property type="protein sequence ID" value="CAM30438.1"/>
    <property type="molecule type" value="Genomic_DNA"/>
</dbReference>
<dbReference type="RefSeq" id="WP_011888975.1">
    <property type="nucleotide sequence ID" value="NC_009332.1"/>
</dbReference>
<dbReference type="SMR" id="A2RF12"/>
<dbReference type="KEGG" id="spf:SpyM51112"/>
<dbReference type="HOGENOM" id="CLU_053861_0_0_9"/>
<dbReference type="UniPathway" id="UPA00002">
    <property type="reaction ID" value="UER00467"/>
</dbReference>
<dbReference type="GO" id="GO:0005829">
    <property type="term" value="C:cytosol"/>
    <property type="evidence" value="ECO:0007669"/>
    <property type="project" value="TreeGrafter"/>
</dbReference>
<dbReference type="GO" id="GO:0000287">
    <property type="term" value="F:magnesium ion binding"/>
    <property type="evidence" value="ECO:0007669"/>
    <property type="project" value="InterPro"/>
</dbReference>
<dbReference type="GO" id="GO:0030145">
    <property type="term" value="F:manganese ion binding"/>
    <property type="evidence" value="ECO:0007669"/>
    <property type="project" value="UniProtKB-UniRule"/>
</dbReference>
<dbReference type="GO" id="GO:0008973">
    <property type="term" value="F:phosphopentomutase activity"/>
    <property type="evidence" value="ECO:0007669"/>
    <property type="project" value="UniProtKB-UniRule"/>
</dbReference>
<dbReference type="GO" id="GO:0006018">
    <property type="term" value="P:2-deoxyribose 1-phosphate catabolic process"/>
    <property type="evidence" value="ECO:0007669"/>
    <property type="project" value="UniProtKB-UniRule"/>
</dbReference>
<dbReference type="GO" id="GO:0006015">
    <property type="term" value="P:5-phosphoribose 1-diphosphate biosynthetic process"/>
    <property type="evidence" value="ECO:0007669"/>
    <property type="project" value="UniProtKB-UniPathway"/>
</dbReference>
<dbReference type="GO" id="GO:0043094">
    <property type="term" value="P:metabolic compound salvage"/>
    <property type="evidence" value="ECO:0007669"/>
    <property type="project" value="InterPro"/>
</dbReference>
<dbReference type="GO" id="GO:0009117">
    <property type="term" value="P:nucleotide metabolic process"/>
    <property type="evidence" value="ECO:0007669"/>
    <property type="project" value="InterPro"/>
</dbReference>
<dbReference type="CDD" id="cd16009">
    <property type="entry name" value="PPM"/>
    <property type="match status" value="1"/>
</dbReference>
<dbReference type="FunFam" id="3.30.70.1250:FF:000001">
    <property type="entry name" value="Phosphopentomutase"/>
    <property type="match status" value="1"/>
</dbReference>
<dbReference type="Gene3D" id="3.40.720.10">
    <property type="entry name" value="Alkaline Phosphatase, subunit A"/>
    <property type="match status" value="1"/>
</dbReference>
<dbReference type="Gene3D" id="3.30.70.1250">
    <property type="entry name" value="Phosphopentomutase"/>
    <property type="match status" value="1"/>
</dbReference>
<dbReference type="HAMAP" id="MF_00740">
    <property type="entry name" value="Phosphopentomut"/>
    <property type="match status" value="1"/>
</dbReference>
<dbReference type="InterPro" id="IPR017850">
    <property type="entry name" value="Alkaline_phosphatase_core_sf"/>
</dbReference>
<dbReference type="InterPro" id="IPR010045">
    <property type="entry name" value="DeoB"/>
</dbReference>
<dbReference type="InterPro" id="IPR006124">
    <property type="entry name" value="Metalloenzyme"/>
</dbReference>
<dbReference type="InterPro" id="IPR024052">
    <property type="entry name" value="Phosphopentomutase_DeoB_cap_sf"/>
</dbReference>
<dbReference type="NCBIfam" id="TIGR01696">
    <property type="entry name" value="deoB"/>
    <property type="match status" value="1"/>
</dbReference>
<dbReference type="NCBIfam" id="NF003766">
    <property type="entry name" value="PRK05362.1"/>
    <property type="match status" value="1"/>
</dbReference>
<dbReference type="PANTHER" id="PTHR21110">
    <property type="entry name" value="PHOSPHOPENTOMUTASE"/>
    <property type="match status" value="1"/>
</dbReference>
<dbReference type="PANTHER" id="PTHR21110:SF0">
    <property type="entry name" value="PHOSPHOPENTOMUTASE"/>
    <property type="match status" value="1"/>
</dbReference>
<dbReference type="Pfam" id="PF01676">
    <property type="entry name" value="Metalloenzyme"/>
    <property type="match status" value="1"/>
</dbReference>
<dbReference type="PIRSF" id="PIRSF001491">
    <property type="entry name" value="Ppentomutase"/>
    <property type="match status" value="1"/>
</dbReference>
<dbReference type="SUPFAM" id="SSF53649">
    <property type="entry name" value="Alkaline phosphatase-like"/>
    <property type="match status" value="1"/>
</dbReference>
<dbReference type="SUPFAM" id="SSF143856">
    <property type="entry name" value="DeoB insert domain-like"/>
    <property type="match status" value="1"/>
</dbReference>
<organism>
    <name type="scientific">Streptococcus pyogenes serotype M5 (strain Manfredo)</name>
    <dbReference type="NCBI Taxonomy" id="160491"/>
    <lineage>
        <taxon>Bacteria</taxon>
        <taxon>Bacillati</taxon>
        <taxon>Bacillota</taxon>
        <taxon>Bacilli</taxon>
        <taxon>Lactobacillales</taxon>
        <taxon>Streptococcaceae</taxon>
        <taxon>Streptococcus</taxon>
    </lineage>
</organism>
<proteinExistence type="inferred from homology"/>
<evidence type="ECO:0000255" key="1">
    <source>
        <dbReference type="HAMAP-Rule" id="MF_00740"/>
    </source>
</evidence>
<protein>
    <recommendedName>
        <fullName evidence="1">Phosphopentomutase</fullName>
        <ecNumber evidence="1">5.4.2.7</ecNumber>
    </recommendedName>
    <alternativeName>
        <fullName evidence="1">Phosphodeoxyribomutase</fullName>
    </alternativeName>
</protein>
<keyword id="KW-0963">Cytoplasm</keyword>
<keyword id="KW-0413">Isomerase</keyword>
<keyword id="KW-0464">Manganese</keyword>
<keyword id="KW-0479">Metal-binding</keyword>
<feature type="chain" id="PRO_1000046408" description="Phosphopentomutase">
    <location>
        <begin position="1"/>
        <end position="403"/>
    </location>
</feature>
<feature type="binding site" evidence="1">
    <location>
        <position position="13"/>
    </location>
    <ligand>
        <name>Mn(2+)</name>
        <dbReference type="ChEBI" id="CHEBI:29035"/>
        <label>1</label>
    </ligand>
</feature>
<feature type="binding site" evidence="1">
    <location>
        <position position="298"/>
    </location>
    <ligand>
        <name>Mn(2+)</name>
        <dbReference type="ChEBI" id="CHEBI:29035"/>
        <label>2</label>
    </ligand>
</feature>
<feature type="binding site" evidence="1">
    <location>
        <position position="303"/>
    </location>
    <ligand>
        <name>Mn(2+)</name>
        <dbReference type="ChEBI" id="CHEBI:29035"/>
        <label>2</label>
    </ligand>
</feature>
<feature type="binding site" evidence="1">
    <location>
        <position position="339"/>
    </location>
    <ligand>
        <name>Mn(2+)</name>
        <dbReference type="ChEBI" id="CHEBI:29035"/>
        <label>1</label>
    </ligand>
</feature>
<feature type="binding site" evidence="1">
    <location>
        <position position="340"/>
    </location>
    <ligand>
        <name>Mn(2+)</name>
        <dbReference type="ChEBI" id="CHEBI:29035"/>
        <label>1</label>
    </ligand>
</feature>
<feature type="binding site" evidence="1">
    <location>
        <position position="351"/>
    </location>
    <ligand>
        <name>Mn(2+)</name>
        <dbReference type="ChEBI" id="CHEBI:29035"/>
        <label>2</label>
    </ligand>
</feature>
<reference key="1">
    <citation type="journal article" date="2007" name="J. Bacteriol.">
        <title>Complete genome of acute rheumatic fever-associated serotype M5 Streptococcus pyogenes strain Manfredo.</title>
        <authorList>
            <person name="Holden M.T.G."/>
            <person name="Scott A."/>
            <person name="Cherevach I."/>
            <person name="Chillingworth T."/>
            <person name="Churcher C."/>
            <person name="Cronin A."/>
            <person name="Dowd L."/>
            <person name="Feltwell T."/>
            <person name="Hamlin N."/>
            <person name="Holroyd S."/>
            <person name="Jagels K."/>
            <person name="Moule S."/>
            <person name="Mungall K."/>
            <person name="Quail M.A."/>
            <person name="Price C."/>
            <person name="Rabbinowitsch E."/>
            <person name="Sharp S."/>
            <person name="Skelton J."/>
            <person name="Whitehead S."/>
            <person name="Barrell B.G."/>
            <person name="Kehoe M."/>
            <person name="Parkhill J."/>
        </authorList>
    </citation>
    <scope>NUCLEOTIDE SEQUENCE [LARGE SCALE GENOMIC DNA]</scope>
    <source>
        <strain>Manfredo</strain>
    </source>
</reference>